<dbReference type="EMBL" id="AE002160">
    <property type="protein sequence ID" value="AAF39526.1"/>
    <property type="molecule type" value="Genomic_DNA"/>
</dbReference>
<dbReference type="PIR" id="A81675">
    <property type="entry name" value="A81675"/>
</dbReference>
<dbReference type="RefSeq" id="WP_010231298.1">
    <property type="nucleotide sequence ID" value="NZ_CP063055.1"/>
</dbReference>
<dbReference type="SMR" id="Q9PJW3"/>
<dbReference type="GeneID" id="1246076"/>
<dbReference type="KEGG" id="cmu:TC_0713"/>
<dbReference type="eggNOG" id="ENOG502Z9VH">
    <property type="taxonomic scope" value="Bacteria"/>
</dbReference>
<dbReference type="HOGENOM" id="CLU_849148_0_0_0"/>
<dbReference type="OrthoDB" id="17355at2"/>
<dbReference type="Proteomes" id="UP000000800">
    <property type="component" value="Chromosome"/>
</dbReference>
<dbReference type="InterPro" id="IPR005361">
    <property type="entry name" value="UPF0158"/>
</dbReference>
<dbReference type="Pfam" id="PF03682">
    <property type="entry name" value="UPF0158"/>
    <property type="match status" value="1"/>
</dbReference>
<evidence type="ECO:0000256" key="1">
    <source>
        <dbReference type="SAM" id="MobiDB-lite"/>
    </source>
</evidence>
<evidence type="ECO:0000305" key="2"/>
<proteinExistence type="inferred from homology"/>
<feature type="chain" id="PRO_0000220646" description="UPF0158 protein TC_0713">
    <location>
        <begin position="1"/>
        <end position="332"/>
    </location>
</feature>
<feature type="region of interest" description="Disordered" evidence="1">
    <location>
        <begin position="196"/>
        <end position="215"/>
    </location>
</feature>
<feature type="region of interest" description="Disordered" evidence="1">
    <location>
        <begin position="291"/>
        <end position="332"/>
    </location>
</feature>
<feature type="compositionally biased region" description="Acidic residues" evidence="1">
    <location>
        <begin position="295"/>
        <end position="316"/>
    </location>
</feature>
<feature type="compositionally biased region" description="Basic residues" evidence="1">
    <location>
        <begin position="320"/>
        <end position="332"/>
    </location>
</feature>
<gene>
    <name type="ordered locus">TC_0713</name>
</gene>
<organism>
    <name type="scientific">Chlamydia muridarum (strain MoPn / Nigg)</name>
    <dbReference type="NCBI Taxonomy" id="243161"/>
    <lineage>
        <taxon>Bacteria</taxon>
        <taxon>Pseudomonadati</taxon>
        <taxon>Chlamydiota</taxon>
        <taxon>Chlamydiia</taxon>
        <taxon>Chlamydiales</taxon>
        <taxon>Chlamydiaceae</taxon>
        <taxon>Chlamydia/Chlamydophila group</taxon>
        <taxon>Chlamydia</taxon>
    </lineage>
</organism>
<comment type="similarity">
    <text evidence="2">Belongs to the UPF0158 family.</text>
</comment>
<name>Y713_CHLMU</name>
<protein>
    <recommendedName>
        <fullName>UPF0158 protein TC_0713</fullName>
    </recommendedName>
</protein>
<reference key="1">
    <citation type="journal article" date="2000" name="Nucleic Acids Res.">
        <title>Genome sequences of Chlamydia trachomatis MoPn and Chlamydia pneumoniae AR39.</title>
        <authorList>
            <person name="Read T.D."/>
            <person name="Brunham R.C."/>
            <person name="Shen C."/>
            <person name="Gill S.R."/>
            <person name="Heidelberg J.F."/>
            <person name="White O."/>
            <person name="Hickey E.K."/>
            <person name="Peterson J.D."/>
            <person name="Utterback T.R."/>
            <person name="Berry K.J."/>
            <person name="Bass S."/>
            <person name="Linher K.D."/>
            <person name="Weidman J.F."/>
            <person name="Khouri H.M."/>
            <person name="Craven B."/>
            <person name="Bowman C."/>
            <person name="Dodson R.J."/>
            <person name="Gwinn M.L."/>
            <person name="Nelson W.C."/>
            <person name="DeBoy R.T."/>
            <person name="Kolonay J.F."/>
            <person name="McClarty G."/>
            <person name="Salzberg S.L."/>
            <person name="Eisen J.A."/>
            <person name="Fraser C.M."/>
        </authorList>
    </citation>
    <scope>NUCLEOTIDE SEQUENCE [LARGE SCALE GENOMIC DNA]</scope>
    <source>
        <strain>MoPn / Nigg</strain>
    </source>
</reference>
<sequence length="332" mass="39202">MTTYPVPQNPLLLRVLRLMDAFSKSDDERDFYVDRVEGFILYIDLDKDQEDLDKVYQELEENADRYCLIPKLTFYEIKKIMETFVNEKIYDIDTKEKFLEIVQSKNAREQFLEFLYDHETEQEKWQQFYVERSRIRIIEWLRNNKFQFVFEEDLDFSKHVLEQLKVHLFDAKVSKELTQARQLLVNKSKVYYSNEALNPRPKRGRPPKQSAKVEAETTVSSDIYTKVPSAARRFLFLPEITSASSLTFSEKFDTEEEFLAHLRGGGRLEDQLNLAKFSERFDSLRELSAKLGYDGDGDASDFFGEEYDDDDDDDDDVKPKKAAKRGRKKARS</sequence>
<accession>Q9PJW3</accession>